<gene>
    <name evidence="1" type="primary">kdsA</name>
    <name type="ordered locus">SG1873</name>
</gene>
<protein>
    <recommendedName>
        <fullName evidence="1">2-dehydro-3-deoxyphosphooctonate aldolase</fullName>
        <ecNumber evidence="1">2.5.1.55</ecNumber>
    </recommendedName>
    <alternativeName>
        <fullName evidence="1">3-deoxy-D-manno-octulosonic acid 8-phosphate synthase</fullName>
    </alternativeName>
    <alternativeName>
        <fullName evidence="1">KDO-8-phosphate synthase</fullName>
        <shortName evidence="1">KDO 8-P synthase</shortName>
        <shortName evidence="1">KDOPS</shortName>
    </alternativeName>
    <alternativeName>
        <fullName evidence="1">Phospho-2-dehydro-3-deoxyoctonate aldolase</fullName>
    </alternativeName>
</protein>
<evidence type="ECO:0000255" key="1">
    <source>
        <dbReference type="HAMAP-Rule" id="MF_00056"/>
    </source>
</evidence>
<reference key="1">
    <citation type="journal article" date="2006" name="Genome Res.">
        <title>Massive genome erosion and functional adaptations provide insights into the symbiotic lifestyle of Sodalis glossinidius in the tsetse host.</title>
        <authorList>
            <person name="Toh H."/>
            <person name="Weiss B.L."/>
            <person name="Perkin S.A.H."/>
            <person name="Yamashita A."/>
            <person name="Oshima K."/>
            <person name="Hattori M."/>
            <person name="Aksoy S."/>
        </authorList>
    </citation>
    <scope>NUCLEOTIDE SEQUENCE [LARGE SCALE GENOMIC DNA]</scope>
    <source>
        <strain>morsitans</strain>
    </source>
</reference>
<organism>
    <name type="scientific">Sodalis glossinidius (strain morsitans)</name>
    <dbReference type="NCBI Taxonomy" id="343509"/>
    <lineage>
        <taxon>Bacteria</taxon>
        <taxon>Pseudomonadati</taxon>
        <taxon>Pseudomonadota</taxon>
        <taxon>Gammaproteobacteria</taxon>
        <taxon>Enterobacterales</taxon>
        <taxon>Bruguierivoracaceae</taxon>
        <taxon>Sodalis</taxon>
    </lineage>
</organism>
<keyword id="KW-0963">Cytoplasm</keyword>
<keyword id="KW-0448">Lipopolysaccharide biosynthesis</keyword>
<keyword id="KW-0808">Transferase</keyword>
<proteinExistence type="inferred from homology"/>
<comment type="catalytic activity">
    <reaction evidence="1">
        <text>D-arabinose 5-phosphate + phosphoenolpyruvate + H2O = 3-deoxy-alpha-D-manno-2-octulosonate-8-phosphate + phosphate</text>
        <dbReference type="Rhea" id="RHEA:14053"/>
        <dbReference type="ChEBI" id="CHEBI:15377"/>
        <dbReference type="ChEBI" id="CHEBI:43474"/>
        <dbReference type="ChEBI" id="CHEBI:57693"/>
        <dbReference type="ChEBI" id="CHEBI:58702"/>
        <dbReference type="ChEBI" id="CHEBI:85985"/>
        <dbReference type="EC" id="2.5.1.55"/>
    </reaction>
</comment>
<comment type="pathway">
    <text evidence="1">Carbohydrate biosynthesis; 3-deoxy-D-manno-octulosonate biosynthesis; 3-deoxy-D-manno-octulosonate from D-ribulose 5-phosphate: step 2/3.</text>
</comment>
<comment type="pathway">
    <text evidence="1">Bacterial outer membrane biogenesis; lipopolysaccharide biosynthesis.</text>
</comment>
<comment type="subcellular location">
    <subcellularLocation>
        <location evidence="1">Cytoplasm</location>
    </subcellularLocation>
</comment>
<comment type="similarity">
    <text evidence="1">Belongs to the KdsA family.</text>
</comment>
<accession>Q2NRS7</accession>
<sequence length="284" mass="30675">MKHLVVNIGDIQAANDLPFVLFGGMNVLESRDLAMRICEHYVTVTEKLGIPYVFKASFDKANRSSIHSYRGPGLDEGMKIFSELKAQFGVKVITDVHEAGQAQSVADVVDVIQLPAFLARQTDLVEAMARTGAVINVKKPQFISPGQVGNIVDKFREAGNHQVILCDRGSNFGYDNLVVDMLGFNVMKQVSGGCPVIFDVTHALQTRDPFGAASGGRRAQVSELARAGMAVGIAGLFIEAHPDPANAKCDGPSALPIAKLEPFLRQMKAIDELVKSFPELDTGH</sequence>
<dbReference type="EC" id="2.5.1.55" evidence="1"/>
<dbReference type="EMBL" id="AP008232">
    <property type="protein sequence ID" value="BAE75148.1"/>
    <property type="molecule type" value="Genomic_DNA"/>
</dbReference>
<dbReference type="RefSeq" id="WP_011411817.1">
    <property type="nucleotide sequence ID" value="NC_007712.1"/>
</dbReference>
<dbReference type="SMR" id="Q2NRS7"/>
<dbReference type="STRING" id="343509.SG1873"/>
<dbReference type="KEGG" id="sgl:SG1873"/>
<dbReference type="eggNOG" id="COG2877">
    <property type="taxonomic scope" value="Bacteria"/>
</dbReference>
<dbReference type="HOGENOM" id="CLU_036666_0_0_6"/>
<dbReference type="OrthoDB" id="9776934at2"/>
<dbReference type="UniPathway" id="UPA00030"/>
<dbReference type="UniPathway" id="UPA00357">
    <property type="reaction ID" value="UER00474"/>
</dbReference>
<dbReference type="Proteomes" id="UP000001932">
    <property type="component" value="Chromosome"/>
</dbReference>
<dbReference type="GO" id="GO:0005737">
    <property type="term" value="C:cytoplasm"/>
    <property type="evidence" value="ECO:0007669"/>
    <property type="project" value="UniProtKB-SubCell"/>
</dbReference>
<dbReference type="GO" id="GO:0008676">
    <property type="term" value="F:3-deoxy-8-phosphooctulonate synthase activity"/>
    <property type="evidence" value="ECO:0007669"/>
    <property type="project" value="UniProtKB-UniRule"/>
</dbReference>
<dbReference type="GO" id="GO:0019294">
    <property type="term" value="P:keto-3-deoxy-D-manno-octulosonic acid biosynthetic process"/>
    <property type="evidence" value="ECO:0007669"/>
    <property type="project" value="UniProtKB-UniRule"/>
</dbReference>
<dbReference type="FunFam" id="3.20.20.70:FF:000058">
    <property type="entry name" value="2-dehydro-3-deoxyphosphooctonate aldolase"/>
    <property type="match status" value="1"/>
</dbReference>
<dbReference type="Gene3D" id="3.20.20.70">
    <property type="entry name" value="Aldolase class I"/>
    <property type="match status" value="1"/>
</dbReference>
<dbReference type="HAMAP" id="MF_00056">
    <property type="entry name" value="KDO8P_synth"/>
    <property type="match status" value="1"/>
</dbReference>
<dbReference type="InterPro" id="IPR013785">
    <property type="entry name" value="Aldolase_TIM"/>
</dbReference>
<dbReference type="InterPro" id="IPR006218">
    <property type="entry name" value="DAHP1/KDSA"/>
</dbReference>
<dbReference type="InterPro" id="IPR006269">
    <property type="entry name" value="KDO8P_synthase"/>
</dbReference>
<dbReference type="NCBIfam" id="TIGR01362">
    <property type="entry name" value="KDO8P_synth"/>
    <property type="match status" value="1"/>
</dbReference>
<dbReference type="NCBIfam" id="NF003543">
    <property type="entry name" value="PRK05198.1"/>
    <property type="match status" value="1"/>
</dbReference>
<dbReference type="NCBIfam" id="NF009109">
    <property type="entry name" value="PRK12457.1"/>
    <property type="match status" value="1"/>
</dbReference>
<dbReference type="PANTHER" id="PTHR21057">
    <property type="entry name" value="PHOSPHO-2-DEHYDRO-3-DEOXYHEPTONATE ALDOLASE"/>
    <property type="match status" value="1"/>
</dbReference>
<dbReference type="Pfam" id="PF00793">
    <property type="entry name" value="DAHP_synth_1"/>
    <property type="match status" value="1"/>
</dbReference>
<dbReference type="SUPFAM" id="SSF51569">
    <property type="entry name" value="Aldolase"/>
    <property type="match status" value="1"/>
</dbReference>
<feature type="chain" id="PRO_0000304495" description="2-dehydro-3-deoxyphosphooctonate aldolase">
    <location>
        <begin position="1"/>
        <end position="284"/>
    </location>
</feature>
<name>KDSA_SODGM</name>